<organism>
    <name type="scientific">Geobacter sulfurreducens (strain ATCC 51573 / DSM 12127 / PCA)</name>
    <dbReference type="NCBI Taxonomy" id="243231"/>
    <lineage>
        <taxon>Bacteria</taxon>
        <taxon>Pseudomonadati</taxon>
        <taxon>Thermodesulfobacteriota</taxon>
        <taxon>Desulfuromonadia</taxon>
        <taxon>Geobacterales</taxon>
        <taxon>Geobacteraceae</taxon>
        <taxon>Geobacter</taxon>
    </lineage>
</organism>
<evidence type="ECO:0000255" key="1">
    <source>
        <dbReference type="HAMAP-Rule" id="MF_00276"/>
    </source>
</evidence>
<proteinExistence type="inferred from homology"/>
<gene>
    <name evidence="1" type="primary">kdpC</name>
    <name type="ordered locus">GSU2482</name>
</gene>
<dbReference type="EMBL" id="AE017180">
    <property type="protein sequence ID" value="AAR35855.1"/>
    <property type="molecule type" value="Genomic_DNA"/>
</dbReference>
<dbReference type="RefSeq" id="NP_953528.1">
    <property type="nucleotide sequence ID" value="NC_002939.5"/>
</dbReference>
<dbReference type="RefSeq" id="WP_010943119.1">
    <property type="nucleotide sequence ID" value="NC_002939.5"/>
</dbReference>
<dbReference type="SMR" id="Q74AA8"/>
<dbReference type="FunCoup" id="Q74AA8">
    <property type="interactions" value="198"/>
</dbReference>
<dbReference type="STRING" id="243231.GSU2482"/>
<dbReference type="EnsemblBacteria" id="AAR35855">
    <property type="protein sequence ID" value="AAR35855"/>
    <property type="gene ID" value="GSU2482"/>
</dbReference>
<dbReference type="KEGG" id="gsu:GSU2482"/>
<dbReference type="PATRIC" id="fig|243231.5.peg.2507"/>
<dbReference type="eggNOG" id="COG2156">
    <property type="taxonomic scope" value="Bacteria"/>
</dbReference>
<dbReference type="HOGENOM" id="CLU_077094_2_0_7"/>
<dbReference type="InParanoid" id="Q74AA8"/>
<dbReference type="OrthoDB" id="9788285at2"/>
<dbReference type="Proteomes" id="UP000000577">
    <property type="component" value="Chromosome"/>
</dbReference>
<dbReference type="GO" id="GO:0005886">
    <property type="term" value="C:plasma membrane"/>
    <property type="evidence" value="ECO:0007669"/>
    <property type="project" value="UniProtKB-SubCell"/>
</dbReference>
<dbReference type="GO" id="GO:0005524">
    <property type="term" value="F:ATP binding"/>
    <property type="evidence" value="ECO:0007669"/>
    <property type="project" value="UniProtKB-UniRule"/>
</dbReference>
<dbReference type="GO" id="GO:0008556">
    <property type="term" value="F:P-type potassium transmembrane transporter activity"/>
    <property type="evidence" value="ECO:0000318"/>
    <property type="project" value="GO_Central"/>
</dbReference>
<dbReference type="GO" id="GO:0071805">
    <property type="term" value="P:potassium ion transmembrane transport"/>
    <property type="evidence" value="ECO:0000318"/>
    <property type="project" value="GO_Central"/>
</dbReference>
<dbReference type="HAMAP" id="MF_00276">
    <property type="entry name" value="KdpC"/>
    <property type="match status" value="1"/>
</dbReference>
<dbReference type="InterPro" id="IPR003820">
    <property type="entry name" value="KdpC"/>
</dbReference>
<dbReference type="NCBIfam" id="TIGR00681">
    <property type="entry name" value="kdpC"/>
    <property type="match status" value="1"/>
</dbReference>
<dbReference type="NCBIfam" id="NF001454">
    <property type="entry name" value="PRK00315.1"/>
    <property type="match status" value="1"/>
</dbReference>
<dbReference type="PANTHER" id="PTHR30042">
    <property type="entry name" value="POTASSIUM-TRANSPORTING ATPASE C CHAIN"/>
    <property type="match status" value="1"/>
</dbReference>
<dbReference type="PANTHER" id="PTHR30042:SF2">
    <property type="entry name" value="POTASSIUM-TRANSPORTING ATPASE KDPC SUBUNIT"/>
    <property type="match status" value="1"/>
</dbReference>
<dbReference type="Pfam" id="PF02669">
    <property type="entry name" value="KdpC"/>
    <property type="match status" value="1"/>
</dbReference>
<dbReference type="PIRSF" id="PIRSF001296">
    <property type="entry name" value="K_ATPase_KdpC"/>
    <property type="match status" value="1"/>
</dbReference>
<reference key="1">
    <citation type="journal article" date="2003" name="Science">
        <title>Genome of Geobacter sulfurreducens: metal reduction in subsurface environments.</title>
        <authorList>
            <person name="Methe B.A."/>
            <person name="Nelson K.E."/>
            <person name="Eisen J.A."/>
            <person name="Paulsen I.T."/>
            <person name="Nelson W.C."/>
            <person name="Heidelberg J.F."/>
            <person name="Wu D."/>
            <person name="Wu M."/>
            <person name="Ward N.L."/>
            <person name="Beanan M.J."/>
            <person name="Dodson R.J."/>
            <person name="Madupu R."/>
            <person name="Brinkac L.M."/>
            <person name="Daugherty S.C."/>
            <person name="DeBoy R.T."/>
            <person name="Durkin A.S."/>
            <person name="Gwinn M.L."/>
            <person name="Kolonay J.F."/>
            <person name="Sullivan S.A."/>
            <person name="Haft D.H."/>
            <person name="Selengut J."/>
            <person name="Davidsen T.M."/>
            <person name="Zafar N."/>
            <person name="White O."/>
            <person name="Tran B."/>
            <person name="Romero C."/>
            <person name="Forberger H.A."/>
            <person name="Weidman J.F."/>
            <person name="Khouri H.M."/>
            <person name="Feldblyum T.V."/>
            <person name="Utterback T.R."/>
            <person name="Van Aken S.E."/>
            <person name="Lovley D.R."/>
            <person name="Fraser C.M."/>
        </authorList>
    </citation>
    <scope>NUCLEOTIDE SEQUENCE [LARGE SCALE GENOMIC DNA]</scope>
    <source>
        <strain>ATCC 51573 / DSM 12127 / PCA</strain>
    </source>
</reference>
<name>KDPC_GEOSL</name>
<protein>
    <recommendedName>
        <fullName evidence="1">Potassium-transporting ATPase KdpC subunit</fullName>
    </recommendedName>
    <alternativeName>
        <fullName evidence="1">ATP phosphohydrolase [potassium-transporting] C chain</fullName>
    </alternativeName>
    <alternativeName>
        <fullName evidence="1">Potassium-binding and translocating subunit C</fullName>
    </alternativeName>
    <alternativeName>
        <fullName evidence="1">Potassium-translocating ATPase C chain</fullName>
    </alternativeName>
</protein>
<keyword id="KW-0067">ATP-binding</keyword>
<keyword id="KW-0997">Cell inner membrane</keyword>
<keyword id="KW-1003">Cell membrane</keyword>
<keyword id="KW-0406">Ion transport</keyword>
<keyword id="KW-0472">Membrane</keyword>
<keyword id="KW-0547">Nucleotide-binding</keyword>
<keyword id="KW-0630">Potassium</keyword>
<keyword id="KW-0633">Potassium transport</keyword>
<keyword id="KW-1185">Reference proteome</keyword>
<keyword id="KW-0812">Transmembrane</keyword>
<keyword id="KW-1133">Transmembrane helix</keyword>
<keyword id="KW-0813">Transport</keyword>
<sequence length="189" mass="19738">MKELKPAILMLIIFTILCGGIYPAVVTGIAQAVFPKQAKGSLITDARGREVGSTLIGQPFSGPKYFWPRPSATPEFGYNPAGSGGSNAGPANPAYLKTVGERIKALRDAGIKGSIPADLVQASASGLDPHISPEAAKVQIPRVARARGMSAGALSRLIAAHTEDRQLGFLGEPRINVLALNLALDTLMP</sequence>
<accession>Q74AA8</accession>
<comment type="function">
    <text evidence="1">Part of the high-affinity ATP-driven potassium transport (or Kdp) system, which catalyzes the hydrolysis of ATP coupled with the electrogenic transport of potassium into the cytoplasm. This subunit acts as a catalytic chaperone that increases the ATP-binding affinity of the ATP-hydrolyzing subunit KdpB by the formation of a transient KdpB/KdpC/ATP ternary complex.</text>
</comment>
<comment type="subunit">
    <text evidence="1">The system is composed of three essential subunits: KdpA, KdpB and KdpC.</text>
</comment>
<comment type="subcellular location">
    <subcellularLocation>
        <location evidence="1">Cell inner membrane</location>
        <topology evidence="1">Single-pass membrane protein</topology>
    </subcellularLocation>
</comment>
<comment type="similarity">
    <text evidence="1">Belongs to the KdpC family.</text>
</comment>
<feature type="chain" id="PRO_1000022287" description="Potassium-transporting ATPase KdpC subunit">
    <location>
        <begin position="1"/>
        <end position="189"/>
    </location>
</feature>
<feature type="transmembrane region" description="Helical" evidence="1">
    <location>
        <begin position="6"/>
        <end position="26"/>
    </location>
</feature>